<reference key="1">
    <citation type="journal article" date="1999" name="Biosci. Biotechnol. Biochem.">
        <title>Replication origin region of the chromosome of alkaliphilic Bacillus halodurans C-125.</title>
        <authorList>
            <person name="Takami H."/>
            <person name="Masui N."/>
            <person name="Nakasone K."/>
            <person name="Horikoshi K."/>
        </authorList>
    </citation>
    <scope>NUCLEOTIDE SEQUENCE [GENOMIC DNA]</scope>
    <source>
        <strain>ATCC BAA-125 / DSM 18197 / FERM 7344 / JCM 9153 / C-125</strain>
    </source>
</reference>
<reference key="2">
    <citation type="journal article" date="2000" name="Nucleic Acids Res.">
        <title>Complete genome sequence of the alkaliphilic bacterium Bacillus halodurans and genomic sequence comparison with Bacillus subtilis.</title>
        <authorList>
            <person name="Takami H."/>
            <person name="Nakasone K."/>
            <person name="Takaki Y."/>
            <person name="Maeno G."/>
            <person name="Sasaki R."/>
            <person name="Masui N."/>
            <person name="Fuji F."/>
            <person name="Hirama C."/>
            <person name="Nakamura Y."/>
            <person name="Ogasawara N."/>
            <person name="Kuhara S."/>
            <person name="Horikoshi K."/>
        </authorList>
    </citation>
    <scope>NUCLEOTIDE SEQUENCE [LARGE SCALE GENOMIC DNA]</scope>
    <source>
        <strain>ATCC BAA-125 / DSM 18197 / FERM 7344 / JCM 9153 / C-125</strain>
    </source>
</reference>
<keyword id="KW-0963">Cytoplasm</keyword>
<keyword id="KW-0235">DNA replication</keyword>
<keyword id="KW-0238">DNA-binding</keyword>
<keyword id="KW-0239">DNA-directed DNA polymerase</keyword>
<keyword id="KW-0548">Nucleotidyltransferase</keyword>
<keyword id="KW-1185">Reference proteome</keyword>
<keyword id="KW-0808">Transferase</keyword>
<protein>
    <recommendedName>
        <fullName>Beta sliding clamp</fullName>
        <shortName>Beta clamp</shortName>
        <shortName>Sliding clamp</shortName>
    </recommendedName>
    <alternativeName>
        <fullName>Beta-clamp processivity factor</fullName>
    </alternativeName>
    <alternativeName>
        <fullName>DNA polymerase III beta sliding clamp subunit</fullName>
    </alternativeName>
    <alternativeName>
        <fullName>DNA polymerase III subunit beta</fullName>
    </alternativeName>
</protein>
<name>DPO3B_HALH5</name>
<feature type="chain" id="PRO_0000105423" description="Beta sliding clamp">
    <location>
        <begin position="1"/>
        <end position="380"/>
    </location>
</feature>
<gene>
    <name type="primary">dnaN</name>
    <name type="ordered locus">BH0002</name>
</gene>
<accession>Q9RCA1</accession>
<comment type="function">
    <text evidence="1">Confers DNA tethering and processivity to DNA polymerases and other proteins. Acts as a clamp, forming a ring around DNA (a reaction catalyzed by the clamp-loading complex) which diffuses in an ATP-independent manner freely and bidirectionally along dsDNA. Initially characterized for its ability to contact the catalytic subunit of DNA polymerase III (Pol III), a complex, multichain enzyme responsible for most of the replicative synthesis in bacteria; Pol III exhibits 3'-5' exonuclease proofreading activity. The beta chain is required for initiation of replication as well as for processivity of DNA replication.</text>
</comment>
<comment type="subunit">
    <text evidence="1">Forms a ring-shaped head-to-tail homodimer around DNA which binds and tethers DNA polymerases and other proteins to the DNA. The DNA replisome complex has a single clamp-loading complex (3 tau and 1 each of delta, delta', psi and chi subunits) which binds 3 Pol III cores (1 core on the leading strand and 2 on the lagging strand) each with a beta sliding clamp dimer. Additional proteins in the replisome are other copies of gamma, psi and chi, Ssb, DNA helicase and RNA primase.</text>
</comment>
<comment type="subcellular location">
    <subcellularLocation>
        <location evidence="1">Cytoplasm</location>
    </subcellularLocation>
</comment>
<comment type="similarity">
    <text evidence="2">Belongs to the beta sliding clamp family.</text>
</comment>
<proteinExistence type="inferred from homology"/>
<organism>
    <name type="scientific">Halalkalibacterium halodurans (strain ATCC BAA-125 / DSM 18197 / FERM 7344 / JCM 9153 / C-125)</name>
    <name type="common">Bacillus halodurans</name>
    <dbReference type="NCBI Taxonomy" id="272558"/>
    <lineage>
        <taxon>Bacteria</taxon>
        <taxon>Bacillati</taxon>
        <taxon>Bacillota</taxon>
        <taxon>Bacilli</taxon>
        <taxon>Bacillales</taxon>
        <taxon>Bacillaceae</taxon>
        <taxon>Halalkalibacterium (ex Joshi et al. 2022)</taxon>
    </lineage>
</organism>
<dbReference type="EMBL" id="AB013492">
    <property type="protein sequence ID" value="BAA82686.1"/>
    <property type="molecule type" value="Genomic_DNA"/>
</dbReference>
<dbReference type="EMBL" id="BA000004">
    <property type="protein sequence ID" value="BAB03721.1"/>
    <property type="molecule type" value="Genomic_DNA"/>
</dbReference>
<dbReference type="PIR" id="B83650">
    <property type="entry name" value="B83650"/>
</dbReference>
<dbReference type="RefSeq" id="WP_010896186.1">
    <property type="nucleotide sequence ID" value="NC_002570.2"/>
</dbReference>
<dbReference type="SMR" id="Q9RCA1"/>
<dbReference type="STRING" id="272558.gene:10725817"/>
<dbReference type="KEGG" id="bha:BH0002"/>
<dbReference type="eggNOG" id="COG0592">
    <property type="taxonomic scope" value="Bacteria"/>
</dbReference>
<dbReference type="HOGENOM" id="CLU_038149_2_0_9"/>
<dbReference type="OrthoDB" id="8421503at2"/>
<dbReference type="Proteomes" id="UP000001258">
    <property type="component" value="Chromosome"/>
</dbReference>
<dbReference type="GO" id="GO:0005737">
    <property type="term" value="C:cytoplasm"/>
    <property type="evidence" value="ECO:0007669"/>
    <property type="project" value="UniProtKB-SubCell"/>
</dbReference>
<dbReference type="GO" id="GO:0009360">
    <property type="term" value="C:DNA polymerase III complex"/>
    <property type="evidence" value="ECO:0007669"/>
    <property type="project" value="InterPro"/>
</dbReference>
<dbReference type="GO" id="GO:0008408">
    <property type="term" value="F:3'-5' exonuclease activity"/>
    <property type="evidence" value="ECO:0007669"/>
    <property type="project" value="InterPro"/>
</dbReference>
<dbReference type="GO" id="GO:0003677">
    <property type="term" value="F:DNA binding"/>
    <property type="evidence" value="ECO:0007669"/>
    <property type="project" value="UniProtKB-KW"/>
</dbReference>
<dbReference type="GO" id="GO:0003887">
    <property type="term" value="F:DNA-directed DNA polymerase activity"/>
    <property type="evidence" value="ECO:0007669"/>
    <property type="project" value="UniProtKB-KW"/>
</dbReference>
<dbReference type="GO" id="GO:0006271">
    <property type="term" value="P:DNA strand elongation involved in DNA replication"/>
    <property type="evidence" value="ECO:0007669"/>
    <property type="project" value="TreeGrafter"/>
</dbReference>
<dbReference type="CDD" id="cd00140">
    <property type="entry name" value="beta_clamp"/>
    <property type="match status" value="1"/>
</dbReference>
<dbReference type="FunFam" id="3.10.150.10:FF:000007">
    <property type="entry name" value="Beta sliding clamp"/>
    <property type="match status" value="1"/>
</dbReference>
<dbReference type="Gene3D" id="3.70.10.10">
    <property type="match status" value="1"/>
</dbReference>
<dbReference type="Gene3D" id="3.10.150.10">
    <property type="entry name" value="DNA Polymerase III, subunit A, domain 2"/>
    <property type="match status" value="1"/>
</dbReference>
<dbReference type="InterPro" id="IPR046938">
    <property type="entry name" value="DNA_clamp_sf"/>
</dbReference>
<dbReference type="InterPro" id="IPR001001">
    <property type="entry name" value="DNA_polIII_beta"/>
</dbReference>
<dbReference type="InterPro" id="IPR022635">
    <property type="entry name" value="DNA_polIII_beta_C"/>
</dbReference>
<dbReference type="InterPro" id="IPR022637">
    <property type="entry name" value="DNA_polIII_beta_cen"/>
</dbReference>
<dbReference type="InterPro" id="IPR022634">
    <property type="entry name" value="DNA_polIII_beta_N"/>
</dbReference>
<dbReference type="NCBIfam" id="TIGR00663">
    <property type="entry name" value="dnan"/>
    <property type="match status" value="1"/>
</dbReference>
<dbReference type="PANTHER" id="PTHR30478:SF0">
    <property type="entry name" value="BETA SLIDING CLAMP"/>
    <property type="match status" value="1"/>
</dbReference>
<dbReference type="PANTHER" id="PTHR30478">
    <property type="entry name" value="DNA POLYMERASE III SUBUNIT BETA"/>
    <property type="match status" value="1"/>
</dbReference>
<dbReference type="Pfam" id="PF00712">
    <property type="entry name" value="DNA_pol3_beta"/>
    <property type="match status" value="1"/>
</dbReference>
<dbReference type="Pfam" id="PF02767">
    <property type="entry name" value="DNA_pol3_beta_2"/>
    <property type="match status" value="1"/>
</dbReference>
<dbReference type="Pfam" id="PF02768">
    <property type="entry name" value="DNA_pol3_beta_3"/>
    <property type="match status" value="1"/>
</dbReference>
<dbReference type="PIRSF" id="PIRSF000804">
    <property type="entry name" value="DNA_pol_III_b"/>
    <property type="match status" value="1"/>
</dbReference>
<dbReference type="SMART" id="SM00480">
    <property type="entry name" value="POL3Bc"/>
    <property type="match status" value="1"/>
</dbReference>
<dbReference type="SUPFAM" id="SSF55979">
    <property type="entry name" value="DNA clamp"/>
    <property type="match status" value="3"/>
</dbReference>
<evidence type="ECO:0000250" key="1">
    <source>
        <dbReference type="UniProtKB" id="P0A988"/>
    </source>
</evidence>
<evidence type="ECO:0000305" key="2"/>
<sequence>MHFVIDRDIFVQNVNHVSKAVSSRTTIPILTGIKIVADHEGVTLTGSDSDISIETFIPLEEGDRQNVEVKQEGSIVLQAKVFAEIVKKLPEQEIEIHVQDSFVTTIRSGSSVFNLNGLDPDEYPRLPVLEEDHVFRLPQKILKDIIRQTVFAVSTQETRPVLTGVNFEIEDGILTCTATDSHRLAMRKVPVEKNDDELQFSNVVIPGKSLNELSKILDENEELLDIVVTENQTLFKLKNMLFFSRLLEGKYPVTKNMIPKEAKTSFAVHTKAFLQTLERALLLSREGKNQVINLKTLGDGVVEVTAITPEIGKVTENVATQGLEGEELRISFNGKNVIDALKVVDSESIHIAFTGAMSPFVLSPTDHDQSLHLFSPVRTY</sequence>